<evidence type="ECO:0000250" key="1"/>
<evidence type="ECO:0000255" key="2"/>
<evidence type="ECO:0000256" key="3">
    <source>
        <dbReference type="SAM" id="MobiDB-lite"/>
    </source>
</evidence>
<evidence type="ECO:0000305" key="4"/>
<organism>
    <name type="scientific">Xenopus laevis</name>
    <name type="common">African clawed frog</name>
    <dbReference type="NCBI Taxonomy" id="8355"/>
    <lineage>
        <taxon>Eukaryota</taxon>
        <taxon>Metazoa</taxon>
        <taxon>Chordata</taxon>
        <taxon>Craniata</taxon>
        <taxon>Vertebrata</taxon>
        <taxon>Euteleostomi</taxon>
        <taxon>Amphibia</taxon>
        <taxon>Batrachia</taxon>
        <taxon>Anura</taxon>
        <taxon>Pipoidea</taxon>
        <taxon>Pipidae</taxon>
        <taxon>Xenopodinae</taxon>
        <taxon>Xenopus</taxon>
        <taxon>Xenopus</taxon>
    </lineage>
</organism>
<protein>
    <recommendedName>
        <fullName>Selenoprotein S A</fullName>
        <shortName>SelS A</shortName>
    </recommendedName>
    <alternativeName>
        <fullName>VCP-interacting membrane protein</fullName>
    </alternativeName>
</protein>
<proteinExistence type="evidence at transcript level"/>
<keyword id="KW-0963">Cytoplasm</keyword>
<keyword id="KW-0256">Endoplasmic reticulum</keyword>
<keyword id="KW-0472">Membrane</keyword>
<keyword id="KW-1185">Reference proteome</keyword>
<keyword id="KW-0712">Selenocysteine</keyword>
<keyword id="KW-0812">Transmembrane</keyword>
<keyword id="KW-1133">Transmembrane helix</keyword>
<comment type="function">
    <text evidence="1">Involved in the degradation process of misfolded endoplasmic reticulum (ER) luminal proteins. Participates in the transfer of misfolded proteins from the ER to the cytosol, where they are destroyed by the proteasome in a ubiquitin-dependent manner (By similarity).</text>
</comment>
<comment type="subcellular location">
    <subcellularLocation>
        <location evidence="1">Endoplasmic reticulum membrane</location>
        <topology evidence="1">Single-pass membrane protein</topology>
    </subcellularLocation>
    <subcellularLocation>
        <location evidence="1">Cytoplasm</location>
    </subcellularLocation>
</comment>
<comment type="similarity">
    <text evidence="4">Belongs to the selenoprotein S family.</text>
</comment>
<comment type="sequence caution" evidence="4">
    <conflict type="erroneous termination">
        <sequence resource="EMBL-CDS" id="AAH78025"/>
    </conflict>
    <text>Truncated C-terminus.</text>
</comment>
<gene>
    <name type="primary">vimp-a</name>
    <name type="synonym">sels-a</name>
</gene>
<sequence>MELGNQPGPGNRPEIELEWYQYVQNTVGWALASYGWYILFGCIILYFLIQKLSANFTRAGASTHTTVTDPDEIVRRQEAVTAARMRMQEELNAQAELYKQKQVQLQEEKRRRNIETWDRMQEGKSSKVACRLGQDASPSTSASSSPSTSSSAPKPKPERKPLRGSGYNPLTGDGGSTCAWRPGRRGPSSGGUG</sequence>
<reference key="1">
    <citation type="submission" date="2004-07" db="EMBL/GenBank/DDBJ databases">
        <authorList>
            <consortium name="NIH - Xenopus Gene Collection (XGC) project"/>
        </authorList>
    </citation>
    <scope>NUCLEOTIDE SEQUENCE [LARGE SCALE MRNA]</scope>
    <source>
        <tissue>Liver</tissue>
    </source>
</reference>
<name>SELSA_XENLA</name>
<accession>Q6AZH0</accession>
<dbReference type="EMBL" id="BC078025">
    <property type="protein sequence ID" value="AAH78025.1"/>
    <property type="status" value="ALT_SEQ"/>
    <property type="molecule type" value="mRNA"/>
</dbReference>
<dbReference type="RefSeq" id="NP_001087125.2">
    <property type="nucleotide sequence ID" value="NM_001093656.2"/>
</dbReference>
<dbReference type="DNASU" id="447014"/>
<dbReference type="GeneID" id="447014"/>
<dbReference type="KEGG" id="xla:447014"/>
<dbReference type="AGR" id="Xenbase:XB-GENE-6254582"/>
<dbReference type="CTD" id="447014"/>
<dbReference type="Xenbase" id="XB-GENE-6254582">
    <property type="gene designation" value="selenos.L"/>
</dbReference>
<dbReference type="OrthoDB" id="75792at2759"/>
<dbReference type="Proteomes" id="UP000186698">
    <property type="component" value="Chromosome 3L"/>
</dbReference>
<dbReference type="Bgee" id="447014">
    <property type="expression patterns" value="Expressed in pancreas and 19 other cell types or tissues"/>
</dbReference>
<dbReference type="GO" id="GO:0036513">
    <property type="term" value="C:Derlin-1 retrotranslocation complex"/>
    <property type="evidence" value="ECO:0000318"/>
    <property type="project" value="GO_Central"/>
</dbReference>
<dbReference type="GO" id="GO:0036502">
    <property type="term" value="C:Derlin-1-VIMP complex"/>
    <property type="evidence" value="ECO:0000318"/>
    <property type="project" value="GO_Central"/>
</dbReference>
<dbReference type="GO" id="GO:0030968">
    <property type="term" value="P:endoplasmic reticulum unfolded protein response"/>
    <property type="evidence" value="ECO:0000318"/>
    <property type="project" value="GO_Central"/>
</dbReference>
<dbReference type="GO" id="GO:0030970">
    <property type="term" value="P:retrograde protein transport, ER to cytosol"/>
    <property type="evidence" value="ECO:0000318"/>
    <property type="project" value="GO_Central"/>
</dbReference>
<dbReference type="Gene3D" id="6.10.250.2950">
    <property type="match status" value="1"/>
</dbReference>
<dbReference type="InterPro" id="IPR009703">
    <property type="entry name" value="Selenoprotein_S"/>
</dbReference>
<dbReference type="PANTHER" id="PTHR28621">
    <property type="entry name" value="SELENOPROTEIN S"/>
    <property type="match status" value="1"/>
</dbReference>
<dbReference type="PANTHER" id="PTHR28621:SF1">
    <property type="entry name" value="SELENOPROTEIN S"/>
    <property type="match status" value="1"/>
</dbReference>
<dbReference type="Pfam" id="PF06936">
    <property type="entry name" value="Selenoprotein_S"/>
    <property type="match status" value="1"/>
</dbReference>
<feature type="chain" id="PRO_0000318652" description="Selenoprotein S A">
    <location>
        <begin position="1"/>
        <end position="193"/>
    </location>
</feature>
<feature type="transmembrane region" description="Helical" evidence="2">
    <location>
        <begin position="29"/>
        <end position="49"/>
    </location>
</feature>
<feature type="region of interest" description="Disordered" evidence="3">
    <location>
        <begin position="114"/>
        <end position="193"/>
    </location>
</feature>
<feature type="compositionally biased region" description="Basic and acidic residues" evidence="3">
    <location>
        <begin position="114"/>
        <end position="125"/>
    </location>
</feature>
<feature type="compositionally biased region" description="Low complexity" evidence="3">
    <location>
        <begin position="137"/>
        <end position="153"/>
    </location>
</feature>
<feature type="non-standard amino acid" description="Selenocysteine" evidence="1">
    <location>
        <position position="192"/>
    </location>
</feature>